<reference key="1">
    <citation type="journal article" date="1997" name="J. Bacteriol.">
        <title>Complete genome sequence of Methanobacterium thermoautotrophicum deltaH: functional analysis and comparative genomics.</title>
        <authorList>
            <person name="Smith D.R."/>
            <person name="Doucette-Stamm L.A."/>
            <person name="Deloughery C."/>
            <person name="Lee H.-M."/>
            <person name="Dubois J."/>
            <person name="Aldredge T."/>
            <person name="Bashirzadeh R."/>
            <person name="Blakely D."/>
            <person name="Cook R."/>
            <person name="Gilbert K."/>
            <person name="Harrison D."/>
            <person name="Hoang L."/>
            <person name="Keagle P."/>
            <person name="Lumm W."/>
            <person name="Pothier B."/>
            <person name="Qiu D."/>
            <person name="Spadafora R."/>
            <person name="Vicare R."/>
            <person name="Wang Y."/>
            <person name="Wierzbowski J."/>
            <person name="Gibson R."/>
            <person name="Jiwani N."/>
            <person name="Caruso A."/>
            <person name="Bush D."/>
            <person name="Safer H."/>
            <person name="Patwell D."/>
            <person name="Prabhakar S."/>
            <person name="McDougall S."/>
            <person name="Shimer G."/>
            <person name="Goyal A."/>
            <person name="Pietrovski S."/>
            <person name="Church G.M."/>
            <person name="Daniels C.J."/>
            <person name="Mao J.-I."/>
            <person name="Rice P."/>
            <person name="Noelling J."/>
            <person name="Reeve J.N."/>
        </authorList>
    </citation>
    <scope>NUCLEOTIDE SEQUENCE [LARGE SCALE GENOMIC DNA]</scope>
    <source>
        <strain>ATCC 29096 / DSM 1053 / JCM 10044 / NBRC 100330 / Delta H</strain>
    </source>
</reference>
<name>RS27A_METTH</name>
<feature type="chain" id="PRO_0000137698" description="Small ribosomal subunit protein eS31">
    <location>
        <begin position="1"/>
        <end position="51"/>
    </location>
</feature>
<feature type="zinc finger region" description="C4-type" evidence="1">
    <location>
        <begin position="21"/>
        <end position="42"/>
    </location>
</feature>
<feature type="binding site" evidence="1">
    <location>
        <position position="21"/>
    </location>
    <ligand>
        <name>Zn(2+)</name>
        <dbReference type="ChEBI" id="CHEBI:29105"/>
    </ligand>
</feature>
<feature type="binding site" evidence="1">
    <location>
        <position position="24"/>
    </location>
    <ligand>
        <name>Zn(2+)</name>
        <dbReference type="ChEBI" id="CHEBI:29105"/>
    </ligand>
</feature>
<feature type="binding site" evidence="1">
    <location>
        <position position="39"/>
    </location>
    <ligand>
        <name>Zn(2+)</name>
        <dbReference type="ChEBI" id="CHEBI:29105"/>
    </ligand>
</feature>
<feature type="binding site" evidence="1">
    <location>
        <position position="42"/>
    </location>
    <ligand>
        <name>Zn(2+)</name>
        <dbReference type="ChEBI" id="CHEBI:29105"/>
    </ligand>
</feature>
<evidence type="ECO:0000255" key="1">
    <source>
        <dbReference type="HAMAP-Rule" id="MF_00777"/>
    </source>
</evidence>
<evidence type="ECO:0000305" key="2"/>
<protein>
    <recommendedName>
        <fullName evidence="1">Small ribosomal subunit protein eS31</fullName>
    </recommendedName>
    <alternativeName>
        <fullName evidence="2">30S ribosomal protein S27ae</fullName>
    </alternativeName>
</protein>
<organism>
    <name type="scientific">Methanothermobacter thermautotrophicus (strain ATCC 29096 / DSM 1053 / JCM 10044 / NBRC 100330 / Delta H)</name>
    <name type="common">Methanobacterium thermoautotrophicum</name>
    <dbReference type="NCBI Taxonomy" id="187420"/>
    <lineage>
        <taxon>Archaea</taxon>
        <taxon>Methanobacteriati</taxon>
        <taxon>Methanobacteriota</taxon>
        <taxon>Methanomada group</taxon>
        <taxon>Methanobacteria</taxon>
        <taxon>Methanobacteriales</taxon>
        <taxon>Methanobacteriaceae</taxon>
        <taxon>Methanothermobacter</taxon>
    </lineage>
</organism>
<sequence length="51" mass="6009">MKKFELYEVKDGKLVRKNPFCVRCSNGVFMADHGDRYACGKCGYTEWKNRE</sequence>
<keyword id="KW-0479">Metal-binding</keyword>
<keyword id="KW-1185">Reference proteome</keyword>
<keyword id="KW-0687">Ribonucleoprotein</keyword>
<keyword id="KW-0689">Ribosomal protein</keyword>
<keyword id="KW-0862">Zinc</keyword>
<keyword id="KW-0863">Zinc-finger</keyword>
<dbReference type="EMBL" id="AE000666">
    <property type="protein sequence ID" value="AAB84774.1"/>
    <property type="molecule type" value="Genomic_DNA"/>
</dbReference>
<dbReference type="PIR" id="G69133">
    <property type="entry name" value="G69133"/>
</dbReference>
<dbReference type="RefSeq" id="WP_010875907.1">
    <property type="nucleotide sequence ID" value="NC_000916.1"/>
</dbReference>
<dbReference type="SMR" id="O26368"/>
<dbReference type="FunCoup" id="O26368">
    <property type="interactions" value="58"/>
</dbReference>
<dbReference type="STRING" id="187420.MTH_268"/>
<dbReference type="PaxDb" id="187420-MTH_268"/>
<dbReference type="EnsemblBacteria" id="AAB84774">
    <property type="protein sequence ID" value="AAB84774"/>
    <property type="gene ID" value="MTH_268"/>
</dbReference>
<dbReference type="KEGG" id="mth:MTH_268"/>
<dbReference type="PATRIC" id="fig|187420.15.peg.237"/>
<dbReference type="HOGENOM" id="CLU_179743_2_0_2"/>
<dbReference type="InParanoid" id="O26368"/>
<dbReference type="Proteomes" id="UP000005223">
    <property type="component" value="Chromosome"/>
</dbReference>
<dbReference type="GO" id="GO:1990904">
    <property type="term" value="C:ribonucleoprotein complex"/>
    <property type="evidence" value="ECO:0007669"/>
    <property type="project" value="UniProtKB-KW"/>
</dbReference>
<dbReference type="GO" id="GO:0005840">
    <property type="term" value="C:ribosome"/>
    <property type="evidence" value="ECO:0007669"/>
    <property type="project" value="UniProtKB-KW"/>
</dbReference>
<dbReference type="GO" id="GO:0003735">
    <property type="term" value="F:structural constituent of ribosome"/>
    <property type="evidence" value="ECO:0007669"/>
    <property type="project" value="InterPro"/>
</dbReference>
<dbReference type="GO" id="GO:0008270">
    <property type="term" value="F:zinc ion binding"/>
    <property type="evidence" value="ECO:0007669"/>
    <property type="project" value="UniProtKB-UniRule"/>
</dbReference>
<dbReference type="GO" id="GO:0006412">
    <property type="term" value="P:translation"/>
    <property type="evidence" value="ECO:0007669"/>
    <property type="project" value="UniProtKB-UniRule"/>
</dbReference>
<dbReference type="Gene3D" id="6.20.50.180">
    <property type="match status" value="1"/>
</dbReference>
<dbReference type="HAMAP" id="MF_00777">
    <property type="entry name" value="Ribosomal_eS31"/>
    <property type="match status" value="1"/>
</dbReference>
<dbReference type="InterPro" id="IPR002906">
    <property type="entry name" value="Ribosomal_eS31"/>
</dbReference>
<dbReference type="InterPro" id="IPR022845">
    <property type="entry name" value="Ribosomal_eS31_arc"/>
</dbReference>
<dbReference type="InterPro" id="IPR011332">
    <property type="entry name" value="Ribosomal_zn-bd"/>
</dbReference>
<dbReference type="NCBIfam" id="NF001669">
    <property type="entry name" value="PRK00432.1"/>
    <property type="match status" value="1"/>
</dbReference>
<dbReference type="Pfam" id="PF01599">
    <property type="entry name" value="Ribosomal_S27"/>
    <property type="match status" value="1"/>
</dbReference>
<dbReference type="SMART" id="SM01402">
    <property type="entry name" value="Ribosomal_S27"/>
    <property type="match status" value="1"/>
</dbReference>
<dbReference type="SUPFAM" id="SSF57829">
    <property type="entry name" value="Zn-binding ribosomal proteins"/>
    <property type="match status" value="1"/>
</dbReference>
<comment type="cofactor">
    <cofactor evidence="1">
        <name>Zn(2+)</name>
        <dbReference type="ChEBI" id="CHEBI:29105"/>
    </cofactor>
    <text evidence="1">Binds 1 zinc ion per subunit.</text>
</comment>
<comment type="subunit">
    <text evidence="1">Part of the 30S ribosomal subunit.</text>
</comment>
<comment type="similarity">
    <text evidence="1">Belongs to the eukaryotic ribosomal protein eS31 family.</text>
</comment>
<accession>O26368</accession>
<gene>
    <name evidence="1" type="primary">rps27ae</name>
    <name type="ordered locus">MTH_268</name>
</gene>
<proteinExistence type="inferred from homology"/>